<proteinExistence type="evidence at protein level"/>
<keyword id="KW-0017">Alkaloid metabolism</keyword>
<keyword id="KW-0349">Heme</keyword>
<keyword id="KW-0408">Iron</keyword>
<keyword id="KW-0472">Membrane</keyword>
<keyword id="KW-0479">Metal-binding</keyword>
<keyword id="KW-0503">Monooxygenase</keyword>
<keyword id="KW-0560">Oxidoreductase</keyword>
<keyword id="KW-0812">Transmembrane</keyword>
<keyword id="KW-1133">Transmembrane helix</keyword>
<keyword id="KW-0843">Virulence</keyword>
<comment type="function">
    <text evidence="3 4 5 6 7 8 9 10 13 14">Cytochrome P450 monooxygenase; part of the gene cluster that mediates the biosynthesis of fumitremorgins, indole alkaloids that carry not only intriguing chemical structures, but also interesting biological and pharmacological activities (PubMed:19226505, PubMed:23649274). The biosynthesis of fumitremorgin-type alkaloids begins by condensation of the two amino acids L-tryptophan and L-proline to brevianamide F, catalyzed by the non-ribosomal peptide synthetase ftmA (PubMed:16755625). Brevianamide F is then prenylated by the prenyltransferase ftmPT1/ftmB in the presence of dimethylallyl diphosphate, resulting in the formation of tryprostatin B (PubMed:16000710, PubMed:21105662, PubMed:23090579). The three cytochrome P450 monooxygenases, ftmP450-1/ftmC, ftmP450-2/ftmE and ftmP450-3/FtmG, are responsible for the conversion of tryprostatin B to 6-hydroxytryprostatin B, tryprostatin A to fumitremorgin C and fumitremorgin C to 12,13-dihydroxyfumitremorgin C, respectively (PubMed:19226505). The putative methyltransferase ftmMT/ftmD is expected for the conversion of 6-hydroxytryprostatin B to tryprostatin A (Probable). FtmPT2/FtmH catalyzes the prenylation of 12,13-dihydroxyfumitre-morgin C in the presence of dimethylallyl diphosphate, resulting in the formation of fumitremorgin B (PubMed:18683158). Fumitremorgin B is further converted to verruculogen by ftmOx1/ftmF via the insertion of an endoperoxide bond between the two prenyl moieties (PubMed:19763315). In some fungal species, verruculogen is further converted to fumitremorgin A, but the enzymes involved in this step have not been identified yet (Probable).</text>
</comment>
<comment type="catalytic activity">
    <reaction evidence="6">
        <text>fumitremorgin C + 2 reduced [NADPH--hemoprotein reductase] + 2 O2 = 12alpha,13alpha-dihydroxyfumitremorgin C + 2 oxidized [NADPH--hemoprotein reductase] + 2 H2O + 2 H(+)</text>
        <dbReference type="Rhea" id="RHEA:35967"/>
        <dbReference type="Rhea" id="RHEA-COMP:11964"/>
        <dbReference type="Rhea" id="RHEA-COMP:11965"/>
        <dbReference type="ChEBI" id="CHEBI:15377"/>
        <dbReference type="ChEBI" id="CHEBI:15378"/>
        <dbReference type="ChEBI" id="CHEBI:15379"/>
        <dbReference type="ChEBI" id="CHEBI:57618"/>
        <dbReference type="ChEBI" id="CHEBI:58210"/>
        <dbReference type="ChEBI" id="CHEBI:72763"/>
        <dbReference type="ChEBI" id="CHEBI:72764"/>
        <dbReference type="EC" id="1.14.14.119"/>
    </reaction>
</comment>
<comment type="cofactor">
    <cofactor evidence="1">
        <name>heme</name>
        <dbReference type="ChEBI" id="CHEBI:30413"/>
    </cofactor>
</comment>
<comment type="pathway">
    <text evidence="6 10">Mycotoxin biosynthesis.</text>
</comment>
<comment type="subcellular location">
    <subcellularLocation>
        <location evidence="2">Membrane</location>
        <topology evidence="2">Single-pass membrane protein</topology>
    </subcellularLocation>
</comment>
<comment type="similarity">
    <text evidence="13">Belongs to the cytochrome P450 family.</text>
</comment>
<reference key="1">
    <citation type="journal article" date="2009" name="ChemBioChem">
        <title>Identification of cytochrome P450s required for fumitremorgin biosynthesis in Aspergillus fumigatus.</title>
        <authorList>
            <person name="Kato N."/>
            <person name="Suzuki H."/>
            <person name="Takagi H."/>
            <person name="Asami Y."/>
            <person name="Kakeya H."/>
            <person name="Uramoto M."/>
            <person name="Usui T."/>
            <person name="Takahashi S."/>
            <person name="Sugimoto Y."/>
            <person name="Osada H."/>
        </authorList>
    </citation>
    <scope>NUCLEOTIDE SEQUENCE [GENOMIC DNA]</scope>
    <scope>FUNCTION</scope>
    <scope>CATALYTIC ACTIVITY</scope>
    <scope>PATHWAY</scope>
    <source>
        <strain>BM939</strain>
    </source>
</reference>
<reference key="2">
    <citation type="journal article" date="2005" name="Microbiology">
        <title>Overproduction, purification and characterization of FtmPT1, a brevianamide F prenyltransferase from Aspergillus fumigatus.</title>
        <authorList>
            <person name="Grundmann A."/>
            <person name="Li S.M."/>
        </authorList>
    </citation>
    <scope>FUNCTION</scope>
</reference>
<reference key="3">
    <citation type="journal article" date="2006" name="ChemBioChem">
        <title>The fumitremorgin gene cluster of Aspergillus fumigatus: identification of a gene encoding brevianamide F synthetase.</title>
        <authorList>
            <person name="Maiya S."/>
            <person name="Grundmann A."/>
            <person name="Li S.M."/>
            <person name="Turner G."/>
        </authorList>
    </citation>
    <scope>FUNCTION</scope>
</reference>
<reference key="4">
    <citation type="journal article" date="2008" name="ChemBioChem">
        <title>FtmPT2, an N-prenyltransferase from Aspergillus fumigatus, catalyses the last step in the biosynthesis of fumitremorgin B.</title>
        <authorList>
            <person name="Grundmann A."/>
            <person name="Kuznetsova T."/>
            <person name="Afiyatullov S.S."/>
            <person name="Li S.M."/>
        </authorList>
    </citation>
    <scope>FUNCTION</scope>
</reference>
<reference key="5">
    <citation type="journal article" date="2009" name="Org. Biomol. Chem.">
        <title>FtmOx1, a non-heme Fe(II) and alpha-ketoglutarate-dependent dioxygenase, catalyses the endoperoxide formation of verruculogen in Aspergillus fumigatus.</title>
        <authorList>
            <person name="Steffan N."/>
            <person name="Grundmann A."/>
            <person name="Afiyatullov S."/>
            <person name="Ruan H."/>
            <person name="Li S.M."/>
        </authorList>
    </citation>
    <scope>FUNCTION</scope>
</reference>
<reference key="6">
    <citation type="journal article" date="2010" name="J. Am. Chem. Soc.">
        <title>Structure-function analysis of an enzymatic prenyl transfer reaction identifies a reaction chamber with modifiable specificity.</title>
        <authorList>
            <person name="Jost M."/>
            <person name="Zocher G."/>
            <person name="Tarcz S."/>
            <person name="Matuschek M."/>
            <person name="Xie X."/>
            <person name="Li S.M."/>
            <person name="Stehle T."/>
        </authorList>
    </citation>
    <scope>FUNCTION</scope>
</reference>
<reference key="7">
    <citation type="journal article" date="2012" name="Org. Biomol. Chem.">
        <title>Breaking the regioselectivity of indole prenyltransferases: identification of regular C3-prenylated hexahydropyrrolo[2,3-b]indoles as side products of the regular C2-prenyltransferase FtmPT1.</title>
        <authorList>
            <person name="Wollinsky B."/>
            <person name="Ludwig L."/>
            <person name="Xie X."/>
            <person name="Li S.M."/>
        </authorList>
    </citation>
    <scope>FUNCTION</scope>
</reference>
<reference key="8">
    <citation type="journal article" date="2013" name="Biosci. Biotechnol. Biochem.">
        <title>A point mutation in ftmD blocks the fumitremorgin biosynthetic pathway in Aspergillus fumigatus strain Af293.</title>
        <authorList>
            <person name="Kato N."/>
            <person name="Suzuki H."/>
            <person name="Okumura H."/>
            <person name="Takahashi S."/>
            <person name="Osada H."/>
        </authorList>
    </citation>
    <scope>FUNCTION</scope>
    <scope>PATHWAY</scope>
</reference>
<feature type="chain" id="PRO_0000424125" description="Fumitremorgin C monooxygenase">
    <location>
        <begin position="1"/>
        <end position="504"/>
    </location>
</feature>
<feature type="transmembrane region" description="Helical" evidence="2">
    <location>
        <begin position="12"/>
        <end position="32"/>
    </location>
</feature>
<feature type="binding site" description="axial binding residue" evidence="1">
    <location>
        <position position="442"/>
    </location>
    <ligand>
        <name>heme</name>
        <dbReference type="ChEBI" id="CHEBI:30413"/>
    </ligand>
    <ligandPart>
        <name>Fe</name>
        <dbReference type="ChEBI" id="CHEBI:18248"/>
    </ligandPart>
</feature>
<organism>
    <name type="scientific">Aspergillus fumigatus</name>
    <name type="common">Neosartorya fumigata</name>
    <dbReference type="NCBI Taxonomy" id="746128"/>
    <lineage>
        <taxon>Eukaryota</taxon>
        <taxon>Fungi</taxon>
        <taxon>Dikarya</taxon>
        <taxon>Ascomycota</taxon>
        <taxon>Pezizomycotina</taxon>
        <taxon>Eurotiomycetes</taxon>
        <taxon>Eurotiomycetidae</taxon>
        <taxon>Eurotiales</taxon>
        <taxon>Aspergillaceae</taxon>
        <taxon>Aspergillus</taxon>
        <taxon>Aspergillus subgen. Fumigati</taxon>
    </lineage>
</organism>
<evidence type="ECO:0000250" key="1">
    <source>
        <dbReference type="UniProtKB" id="P04798"/>
    </source>
</evidence>
<evidence type="ECO:0000255" key="2"/>
<evidence type="ECO:0000269" key="3">
    <source>
    </source>
</evidence>
<evidence type="ECO:0000269" key="4">
    <source>
    </source>
</evidence>
<evidence type="ECO:0000269" key="5">
    <source>
    </source>
</evidence>
<evidence type="ECO:0000269" key="6">
    <source>
    </source>
</evidence>
<evidence type="ECO:0000269" key="7">
    <source>
    </source>
</evidence>
<evidence type="ECO:0000269" key="8">
    <source>
    </source>
</evidence>
<evidence type="ECO:0000269" key="9">
    <source>
    </source>
</evidence>
<evidence type="ECO:0000269" key="10">
    <source>
    </source>
</evidence>
<evidence type="ECO:0000303" key="11">
    <source>
    </source>
</evidence>
<evidence type="ECO:0000303" key="12">
    <source>
    </source>
</evidence>
<evidence type="ECO:0000305" key="13"/>
<evidence type="ECO:0000305" key="14">
    <source>
    </source>
</evidence>
<sequence>METLDAIQLPYLGVVGASLIVILGIILLFPLGSDPFITINQHPRDLFQTKAKQQFEYNAAALLNEGLQTGHSAFRLVTNMVTYLILKDQYAEEIKNDSRFGAHEAVDPVLLVDLPGLESMFQGSLHNQVPPMAVRALNKELVHLTPSLSEEAMNCLQTRWTDSTEWHGVSIPETVLALIAQMTTRALLGPELCRNPEWLDIAKSFTTNRAIAVAAVQSWPSFLQPVIHWFLPPCRALRRQIQCARNIILPALERERRAYCSDQPTKREFSNLVFIDQYAKGARYDATMAQLRIIAVAFQTTSDLVEKVIARLCKHPELIEPLREEVVSVVGNRGLHRHSLRKLTLMESVMKETQRLEPAVIIGMFRLAKEKVTLKDGTVVPKGTNIAFANDLRFDPEMYLEPETFDGYRFQRMREDPAKIDLAPFTKTRMSHLAFGHGKHACPGRFLACDEAKLILCHILLNYDIRAVEGSPPELRARGMFVQLDPGAMMSVRRRRGTETAPHG</sequence>
<accession>B9WZX6</accession>
<name>FTMG_ASPFM</name>
<protein>
    <recommendedName>
        <fullName evidence="11">Fumitremorgin C monooxygenase</fullName>
        <ecNumber evidence="6">1.14.14.119</ecNumber>
    </recommendedName>
    <alternativeName>
        <fullName evidence="11">Cytochrome P450 monooxygenase ftmP450-3</fullName>
    </alternativeName>
    <alternativeName>
        <fullName evidence="12">Fumitremorgin biosynthesis protein G</fullName>
    </alternativeName>
</protein>
<dbReference type="EC" id="1.14.14.119" evidence="6"/>
<dbReference type="EMBL" id="AB436628">
    <property type="protein sequence ID" value="BAH24001.1"/>
    <property type="molecule type" value="Genomic_DNA"/>
</dbReference>
<dbReference type="SMR" id="B9WZX6"/>
<dbReference type="BioCyc" id="MetaCyc:MONOMER-18766"/>
<dbReference type="BRENDA" id="1.14.14.119">
    <property type="organism ID" value="508"/>
</dbReference>
<dbReference type="GO" id="GO:0016020">
    <property type="term" value="C:membrane"/>
    <property type="evidence" value="ECO:0007669"/>
    <property type="project" value="UniProtKB-SubCell"/>
</dbReference>
<dbReference type="GO" id="GO:0020037">
    <property type="term" value="F:heme binding"/>
    <property type="evidence" value="ECO:0007669"/>
    <property type="project" value="InterPro"/>
</dbReference>
<dbReference type="GO" id="GO:0005506">
    <property type="term" value="F:iron ion binding"/>
    <property type="evidence" value="ECO:0007669"/>
    <property type="project" value="InterPro"/>
</dbReference>
<dbReference type="GO" id="GO:0004497">
    <property type="term" value="F:monooxygenase activity"/>
    <property type="evidence" value="ECO:0007669"/>
    <property type="project" value="UniProtKB-KW"/>
</dbReference>
<dbReference type="GO" id="GO:0016705">
    <property type="term" value="F:oxidoreductase activity, acting on paired donors, with incorporation or reduction of molecular oxygen"/>
    <property type="evidence" value="ECO:0007669"/>
    <property type="project" value="InterPro"/>
</dbReference>
<dbReference type="GO" id="GO:1902181">
    <property type="term" value="P:verruculogen biosynthetic process"/>
    <property type="evidence" value="ECO:0000314"/>
    <property type="project" value="GO_Central"/>
</dbReference>
<dbReference type="CDD" id="cd11041">
    <property type="entry name" value="CYP503A1-like"/>
    <property type="match status" value="1"/>
</dbReference>
<dbReference type="Gene3D" id="1.10.630.10">
    <property type="entry name" value="Cytochrome P450"/>
    <property type="match status" value="1"/>
</dbReference>
<dbReference type="InterPro" id="IPR001128">
    <property type="entry name" value="Cyt_P450"/>
</dbReference>
<dbReference type="InterPro" id="IPR017972">
    <property type="entry name" value="Cyt_P450_CS"/>
</dbReference>
<dbReference type="InterPro" id="IPR002403">
    <property type="entry name" value="Cyt_P450_E_grp-IV"/>
</dbReference>
<dbReference type="InterPro" id="IPR036396">
    <property type="entry name" value="Cyt_P450_sf"/>
</dbReference>
<dbReference type="PANTHER" id="PTHR46206">
    <property type="entry name" value="CYTOCHROME P450"/>
    <property type="match status" value="1"/>
</dbReference>
<dbReference type="PANTHER" id="PTHR46206:SF3">
    <property type="entry name" value="P450, PUTATIVE (EUROFUNG)-RELATED"/>
    <property type="match status" value="1"/>
</dbReference>
<dbReference type="Pfam" id="PF00067">
    <property type="entry name" value="p450"/>
    <property type="match status" value="1"/>
</dbReference>
<dbReference type="PRINTS" id="PR00465">
    <property type="entry name" value="EP450IV"/>
</dbReference>
<dbReference type="PRINTS" id="PR00385">
    <property type="entry name" value="P450"/>
</dbReference>
<dbReference type="SUPFAM" id="SSF48264">
    <property type="entry name" value="Cytochrome P450"/>
    <property type="match status" value="1"/>
</dbReference>
<dbReference type="PROSITE" id="PS00086">
    <property type="entry name" value="CYTOCHROME_P450"/>
    <property type="match status" value="1"/>
</dbReference>
<gene>
    <name evidence="11" type="primary">ftmP450-3</name>
    <name evidence="12" type="synonym">ftmG</name>
</gene>